<dbReference type="EC" id="3.6.1.-"/>
<dbReference type="EMBL" id="AF453428">
    <property type="protein sequence ID" value="AAN76848.1"/>
    <property type="molecule type" value="mRNA"/>
</dbReference>
<dbReference type="EMBL" id="BC027267">
    <property type="protein sequence ID" value="AAH27267.1"/>
    <property type="molecule type" value="mRNA"/>
</dbReference>
<dbReference type="CCDS" id="CCDS71237.1"/>
<dbReference type="RefSeq" id="NP_705789.1">
    <property type="nucleotide sequence ID" value="NM_153561.3"/>
</dbReference>
<dbReference type="SMR" id="Q8CH40"/>
<dbReference type="BioGRID" id="230824">
    <property type="interactions" value="1"/>
</dbReference>
<dbReference type="FunCoup" id="Q8CH40">
    <property type="interactions" value="437"/>
</dbReference>
<dbReference type="STRING" id="10090.ENSMUSP00000056219"/>
<dbReference type="iPTMnet" id="Q8CH40"/>
<dbReference type="PhosphoSitePlus" id="Q8CH40"/>
<dbReference type="PaxDb" id="10090-ENSMUSP00000056219"/>
<dbReference type="ProteomicsDB" id="287853"/>
<dbReference type="DNASU" id="229228"/>
<dbReference type="GeneID" id="229228"/>
<dbReference type="KEGG" id="mmu:229228"/>
<dbReference type="AGR" id="MGI:2387618"/>
<dbReference type="CTD" id="11162"/>
<dbReference type="MGI" id="MGI:2387618">
    <property type="gene designation" value="Nudt6"/>
</dbReference>
<dbReference type="eggNOG" id="KOG0648">
    <property type="taxonomic scope" value="Eukaryota"/>
</dbReference>
<dbReference type="InParanoid" id="Q8CH40"/>
<dbReference type="OrthoDB" id="447842at2759"/>
<dbReference type="PhylomeDB" id="Q8CH40"/>
<dbReference type="BioGRID-ORCS" id="229228">
    <property type="hits" value="2 hits in 77 CRISPR screens"/>
</dbReference>
<dbReference type="PRO" id="PR:Q8CH40"/>
<dbReference type="Proteomes" id="UP000000589">
    <property type="component" value="Unplaced"/>
</dbReference>
<dbReference type="RNAct" id="Q8CH40">
    <property type="molecule type" value="protein"/>
</dbReference>
<dbReference type="GO" id="GO:0005739">
    <property type="term" value="C:mitochondrion"/>
    <property type="evidence" value="ECO:0007669"/>
    <property type="project" value="UniProtKB-SubCell"/>
</dbReference>
<dbReference type="GO" id="GO:0005634">
    <property type="term" value="C:nucleus"/>
    <property type="evidence" value="ECO:0007669"/>
    <property type="project" value="UniProtKB-SubCell"/>
</dbReference>
<dbReference type="GO" id="GO:0016787">
    <property type="term" value="F:hydrolase activity"/>
    <property type="evidence" value="ECO:0007669"/>
    <property type="project" value="UniProtKB-KW"/>
</dbReference>
<dbReference type="CDD" id="cd04670">
    <property type="entry name" value="NUDIX_ASFGF2_Nudt6"/>
    <property type="match status" value="1"/>
</dbReference>
<dbReference type="FunFam" id="3.40.630.30:FF:000062">
    <property type="entry name" value="Nucleoside diphosphate-linked moiety X motif 6"/>
    <property type="match status" value="1"/>
</dbReference>
<dbReference type="FunFam" id="4.10.80.100:FF:000001">
    <property type="entry name" value="Nucleoside diphosphate-linked moiety X motif 6"/>
    <property type="match status" value="1"/>
</dbReference>
<dbReference type="FunFam" id="3.90.79.10:FF:000027">
    <property type="entry name" value="nucleoside diphosphate-linked moiety X motif 6"/>
    <property type="match status" value="1"/>
</dbReference>
<dbReference type="Gene3D" id="3.40.630.30">
    <property type="match status" value="1"/>
</dbReference>
<dbReference type="Gene3D" id="4.10.80.100">
    <property type="match status" value="1"/>
</dbReference>
<dbReference type="Gene3D" id="3.90.79.10">
    <property type="entry name" value="Nucleoside Triphosphate Pyrophosphohydrolase"/>
    <property type="match status" value="1"/>
</dbReference>
<dbReference type="InterPro" id="IPR020476">
    <property type="entry name" value="Nudix_hydrolase"/>
</dbReference>
<dbReference type="InterPro" id="IPR015797">
    <property type="entry name" value="NUDIX_hydrolase-like_dom_sf"/>
</dbReference>
<dbReference type="InterPro" id="IPR003293">
    <property type="entry name" value="Nudix_hydrolase6-like"/>
</dbReference>
<dbReference type="InterPro" id="IPR020084">
    <property type="entry name" value="NUDIX_hydrolase_CS"/>
</dbReference>
<dbReference type="InterPro" id="IPR000086">
    <property type="entry name" value="NUDIX_hydrolase_dom"/>
</dbReference>
<dbReference type="InterPro" id="IPR040618">
    <property type="entry name" value="Pre-Nudix"/>
</dbReference>
<dbReference type="PANTHER" id="PTHR13994:SF46">
    <property type="entry name" value="NUCLEOSIDE DIPHOSPHATE-LINKED MOIETY X MOTIF 6"/>
    <property type="match status" value="1"/>
</dbReference>
<dbReference type="PANTHER" id="PTHR13994">
    <property type="entry name" value="NUDIX HYDROLASE RELATED"/>
    <property type="match status" value="1"/>
</dbReference>
<dbReference type="Pfam" id="PF00293">
    <property type="entry name" value="NUDIX"/>
    <property type="match status" value="1"/>
</dbReference>
<dbReference type="Pfam" id="PF18290">
    <property type="entry name" value="Nudix_hydro"/>
    <property type="match status" value="1"/>
</dbReference>
<dbReference type="PRINTS" id="PR01356">
    <property type="entry name" value="GFGPROTEIN"/>
</dbReference>
<dbReference type="PRINTS" id="PR00502">
    <property type="entry name" value="NUDIXFAMILY"/>
</dbReference>
<dbReference type="SUPFAM" id="SSF55811">
    <property type="entry name" value="Nudix"/>
    <property type="match status" value="1"/>
</dbReference>
<dbReference type="PROSITE" id="PS51462">
    <property type="entry name" value="NUDIX"/>
    <property type="match status" value="1"/>
</dbReference>
<dbReference type="PROSITE" id="PS00893">
    <property type="entry name" value="NUDIX_BOX"/>
    <property type="match status" value="1"/>
</dbReference>
<name>NUDT6_MOUSE</name>
<feature type="chain" id="PRO_0000057108" description="Nucleoside diphosphate-linked moiety X motif 6">
    <location>
        <begin position="1"/>
        <end position="313"/>
    </location>
</feature>
<feature type="domain" description="Nudix hydrolase" evidence="2">
    <location>
        <begin position="138"/>
        <end position="270"/>
    </location>
</feature>
<feature type="sequence conflict" description="In Ref. 2; AAH27267." evidence="3" ref="2">
    <original>D</original>
    <variation>E</variation>
    <location>
        <position position="85"/>
    </location>
</feature>
<feature type="sequence conflict" description="In Ref. 2; AAH27267." evidence="3" ref="2">
    <location>
        <position position="182"/>
    </location>
</feature>
<accession>Q8CH40</accession>
<accession>Q8R2T3</accession>
<comment type="function">
    <text evidence="1">May contribute to the regulation of cell proliferation.</text>
</comment>
<comment type="subunit">
    <text evidence="1">Monomer and homodimer.</text>
</comment>
<comment type="subcellular location">
    <subcellularLocation>
        <location evidence="1">Cytoplasm</location>
    </subcellularLocation>
    <subcellularLocation>
        <location evidence="1">Nucleus</location>
    </subcellularLocation>
    <subcellularLocation>
        <location evidence="1">Mitochondrion</location>
    </subcellularLocation>
</comment>
<comment type="miscellaneous">
    <text>This protein is coded from a FGF2 (BFGF) gene antisense transcript.</text>
</comment>
<comment type="similarity">
    <text evidence="3">Belongs to the Nudix hydrolase family.</text>
</comment>
<proteinExistence type="evidence at protein level"/>
<reference key="1">
    <citation type="submission" date="2001-11" db="EMBL/GenBank/DDBJ databases">
        <title>Identification of a bi-directional locus of SPAF and AS-FGF2 and its activation in early spermatogenesis and malignant progression.</title>
        <authorList>
            <person name="Liu Y."/>
            <person name="Wang Z."/>
            <person name="Lagowski J.P."/>
            <person name="Kulesz-Martin M.F."/>
        </authorList>
    </citation>
    <scope>NUCLEOTIDE SEQUENCE [MRNA]</scope>
    <source>
        <strain>BALB/cJ</strain>
    </source>
</reference>
<reference key="2">
    <citation type="journal article" date="2004" name="Genome Res.">
        <title>The status, quality, and expansion of the NIH full-length cDNA project: the Mammalian Gene Collection (MGC).</title>
        <authorList>
            <consortium name="The MGC Project Team"/>
        </authorList>
    </citation>
    <scope>NUCLEOTIDE SEQUENCE [LARGE SCALE MRNA]</scope>
    <source>
        <strain>FVB/N</strain>
        <tissue>Mammary tumor</tissue>
    </source>
</reference>
<reference key="3">
    <citation type="journal article" date="2010" name="Cell">
        <title>A tissue-specific atlas of mouse protein phosphorylation and expression.</title>
        <authorList>
            <person name="Huttlin E.L."/>
            <person name="Jedrychowski M.P."/>
            <person name="Elias J.E."/>
            <person name="Goswami T."/>
            <person name="Rad R."/>
            <person name="Beausoleil S.A."/>
            <person name="Villen J."/>
            <person name="Haas W."/>
            <person name="Sowa M.E."/>
            <person name="Gygi S.P."/>
        </authorList>
    </citation>
    <scope>IDENTIFICATION BY MASS SPECTROMETRY [LARGE SCALE ANALYSIS]</scope>
    <source>
        <tissue>Brown adipose tissue</tissue>
        <tissue>Heart</tissue>
    </source>
</reference>
<protein>
    <recommendedName>
        <fullName>Nucleoside diphosphate-linked moiety X motif 6</fullName>
        <shortName>Nudix motif 6</shortName>
        <ecNumber>3.6.1.-</ecNumber>
    </recommendedName>
    <alternativeName>
        <fullName>Antisense basic fibroblast growth factor B</fullName>
    </alternativeName>
</protein>
<evidence type="ECO:0000250" key="1"/>
<evidence type="ECO:0000255" key="2">
    <source>
        <dbReference type="PROSITE-ProRule" id="PRU00794"/>
    </source>
</evidence>
<evidence type="ECO:0000305" key="3"/>
<gene>
    <name type="primary">Nudt6</name>
    <name type="synonym">Asfgf2b</name>
</gene>
<organism>
    <name type="scientific">Mus musculus</name>
    <name type="common">Mouse</name>
    <dbReference type="NCBI Taxonomy" id="10090"/>
    <lineage>
        <taxon>Eukaryota</taxon>
        <taxon>Metazoa</taxon>
        <taxon>Chordata</taxon>
        <taxon>Craniata</taxon>
        <taxon>Vertebrata</taxon>
        <taxon>Euteleostomi</taxon>
        <taxon>Mammalia</taxon>
        <taxon>Eutheria</taxon>
        <taxon>Euarchontoglires</taxon>
        <taxon>Glires</taxon>
        <taxon>Rodentia</taxon>
        <taxon>Myomorpha</taxon>
        <taxon>Muroidea</taxon>
        <taxon>Muridae</taxon>
        <taxon>Murinae</taxon>
        <taxon>Mus</taxon>
        <taxon>Mus</taxon>
    </lineage>
</organism>
<keyword id="KW-0963">Cytoplasm</keyword>
<keyword id="KW-0378">Hydrolase</keyword>
<keyword id="KW-0496">Mitochondrion</keyword>
<keyword id="KW-0539">Nucleus</keyword>
<keyword id="KW-1185">Reference proteome</keyword>
<sequence length="313" mass="35197">MWWVRRTRYWFSTLLYAGGARLRPGRRTASGGLETPGSCGAELQGELDRFGGVSVHLSRHHTLHGLDAAAFRRLLQAAIQQWRSDGRIAAWLHIPILQSHFIAPAASLGFCFHHAKPHSSTLTLWLGEGPSRLPGYATHQVGVAGAVFDVSTRKVLVVQDRNKLKNMWKFPGGLSEPGEDIADTAVREVFEETGVKSEFRSLLSIRQQHRSPGAFGMSDMYLVCRLQPRSFTINFCQQECLKCEWIDLENLARTKHTTPITSRVARLLLYGLREGFDKIDLSMEELPAVYTGLFYKLYHRELPESYKAATGAD</sequence>